<proteinExistence type="inferred from homology"/>
<dbReference type="EMBL" id="EQ973834">
    <property type="protein sequence ID" value="EEF43272.1"/>
    <property type="molecule type" value="Genomic_DNA"/>
</dbReference>
<dbReference type="SMR" id="B9RZ92"/>
<dbReference type="STRING" id="3988.B9RZ92"/>
<dbReference type="KEGG" id="rcu:8279502"/>
<dbReference type="eggNOG" id="ENOG502RZXX">
    <property type="taxonomic scope" value="Eukaryota"/>
</dbReference>
<dbReference type="InParanoid" id="B9RZ92"/>
<dbReference type="OMA" id="EAIACAY"/>
<dbReference type="OrthoDB" id="1906221at2759"/>
<dbReference type="Proteomes" id="UP000008311">
    <property type="component" value="Unassembled WGS sequence"/>
</dbReference>
<dbReference type="GO" id="GO:0005886">
    <property type="term" value="C:plasma membrane"/>
    <property type="evidence" value="ECO:0000318"/>
    <property type="project" value="GO_Central"/>
</dbReference>
<dbReference type="InterPro" id="IPR006459">
    <property type="entry name" value="CASP/CASPL"/>
</dbReference>
<dbReference type="InterPro" id="IPR006702">
    <property type="entry name" value="CASP_dom"/>
</dbReference>
<dbReference type="InterPro" id="IPR044173">
    <property type="entry name" value="CASPL"/>
</dbReference>
<dbReference type="NCBIfam" id="TIGR01569">
    <property type="entry name" value="A_tha_TIGR01569"/>
    <property type="match status" value="1"/>
</dbReference>
<dbReference type="PANTHER" id="PTHR36488">
    <property type="entry name" value="CASP-LIKE PROTEIN 1U1"/>
    <property type="match status" value="1"/>
</dbReference>
<dbReference type="PANTHER" id="PTHR36488:SF8">
    <property type="entry name" value="CASP-LIKE PROTEIN 1U1"/>
    <property type="match status" value="1"/>
</dbReference>
<dbReference type="Pfam" id="PF04535">
    <property type="entry name" value="CASP_dom"/>
    <property type="match status" value="1"/>
</dbReference>
<reference key="1">
    <citation type="journal article" date="2010" name="Nat. Biotechnol.">
        <title>Draft genome sequence of the oilseed species Ricinus communis.</title>
        <authorList>
            <person name="Chan A.P."/>
            <person name="Crabtree J."/>
            <person name="Zhao Q."/>
            <person name="Lorenzi H."/>
            <person name="Orvis J."/>
            <person name="Puiu D."/>
            <person name="Melake-Berhan A."/>
            <person name="Jones K.M."/>
            <person name="Redman J."/>
            <person name="Chen G."/>
            <person name="Cahoon E.B."/>
            <person name="Gedil M."/>
            <person name="Stanke M."/>
            <person name="Haas B.J."/>
            <person name="Wortman J.R."/>
            <person name="Fraser-Liggett C.M."/>
            <person name="Ravel J."/>
            <person name="Rabinowicz P.D."/>
        </authorList>
    </citation>
    <scope>NUCLEOTIDE SEQUENCE [LARGE SCALE GENOMIC DNA]</scope>
    <source>
        <strain>cv. Hale</strain>
    </source>
</reference>
<reference key="2">
    <citation type="journal article" date="2014" name="Plant Physiol.">
        <title>Functional and evolutionary analysis of the CASPARIAN STRIP MEMBRANE DOMAIN PROTEIN family.</title>
        <authorList>
            <person name="Roppolo D."/>
            <person name="Boeckmann B."/>
            <person name="Pfister A."/>
            <person name="Boutet E."/>
            <person name="Rubio M.C."/>
            <person name="Denervaud-Tendon V."/>
            <person name="Vermeer J.E."/>
            <person name="Gheyselinck J."/>
            <person name="Xenarios I."/>
            <person name="Geldner N."/>
        </authorList>
    </citation>
    <scope>GENE FAMILY</scope>
    <scope>NOMENCLATURE</scope>
</reference>
<name>CSPL2_RICCO</name>
<protein>
    <recommendedName>
        <fullName>CASP-like protein 1C2</fullName>
        <shortName>RcCASPL1C2</shortName>
    </recommendedName>
</protein>
<comment type="subunit">
    <text evidence="1">Homodimer and heterodimers.</text>
</comment>
<comment type="subcellular location">
    <subcellularLocation>
        <location evidence="1">Cell membrane</location>
        <topology evidence="1">Multi-pass membrane protein</topology>
    </subcellularLocation>
</comment>
<comment type="similarity">
    <text evidence="3">Belongs to the Casparian strip membrane proteins (CASP) family.</text>
</comment>
<sequence length="164" mass="17582">MAVELKKVFSTILRFLALAATVVAVIVMIRSHDSAIVLNLTFSAKYNNTPAFKYFVIAEGIASVYTIIVIFLWSKGLLGRLIVILDMVTTVLLTSSISAALAIAQVGKKGNSHAGWLPVCGQVPKFCDQAIIALVAGFVAAIVYFMLLLCSLHAVLTPIFAVKP</sequence>
<accession>B9RZ92</accession>
<organism>
    <name type="scientific">Ricinus communis</name>
    <name type="common">Castor bean</name>
    <dbReference type="NCBI Taxonomy" id="3988"/>
    <lineage>
        <taxon>Eukaryota</taxon>
        <taxon>Viridiplantae</taxon>
        <taxon>Streptophyta</taxon>
        <taxon>Embryophyta</taxon>
        <taxon>Tracheophyta</taxon>
        <taxon>Spermatophyta</taxon>
        <taxon>Magnoliopsida</taxon>
        <taxon>eudicotyledons</taxon>
        <taxon>Gunneridae</taxon>
        <taxon>Pentapetalae</taxon>
        <taxon>rosids</taxon>
        <taxon>fabids</taxon>
        <taxon>Malpighiales</taxon>
        <taxon>Euphorbiaceae</taxon>
        <taxon>Acalyphoideae</taxon>
        <taxon>Acalypheae</taxon>
        <taxon>Ricinus</taxon>
    </lineage>
</organism>
<evidence type="ECO:0000250" key="1"/>
<evidence type="ECO:0000255" key="2"/>
<evidence type="ECO:0000305" key="3"/>
<keyword id="KW-1003">Cell membrane</keyword>
<keyword id="KW-0325">Glycoprotein</keyword>
<keyword id="KW-0472">Membrane</keyword>
<keyword id="KW-1185">Reference proteome</keyword>
<keyword id="KW-0812">Transmembrane</keyword>
<keyword id="KW-1133">Transmembrane helix</keyword>
<feature type="chain" id="PRO_0000376094" description="CASP-like protein 1C2">
    <location>
        <begin position="1"/>
        <end position="164"/>
    </location>
</feature>
<feature type="topological domain" description="Cytoplasmic" evidence="2">
    <location>
        <begin position="1"/>
        <end position="8"/>
    </location>
</feature>
<feature type="transmembrane region" description="Helical" evidence="2">
    <location>
        <begin position="9"/>
        <end position="29"/>
    </location>
</feature>
<feature type="topological domain" description="Extracellular" evidence="2">
    <location>
        <begin position="30"/>
        <end position="53"/>
    </location>
</feature>
<feature type="transmembrane region" description="Helical" evidence="2">
    <location>
        <begin position="54"/>
        <end position="74"/>
    </location>
</feature>
<feature type="topological domain" description="Cytoplasmic" evidence="2">
    <location>
        <begin position="75"/>
        <end position="80"/>
    </location>
</feature>
<feature type="transmembrane region" description="Helical" evidence="2">
    <location>
        <begin position="81"/>
        <end position="101"/>
    </location>
</feature>
<feature type="topological domain" description="Extracellular" evidence="2">
    <location>
        <begin position="102"/>
        <end position="129"/>
    </location>
</feature>
<feature type="transmembrane region" description="Helical" evidence="2">
    <location>
        <begin position="130"/>
        <end position="150"/>
    </location>
</feature>
<feature type="topological domain" description="Cytoplasmic" evidence="2">
    <location>
        <begin position="151"/>
        <end position="164"/>
    </location>
</feature>
<feature type="glycosylation site" description="N-linked (GlcNAc...) asparagine" evidence="2">
    <location>
        <position position="39"/>
    </location>
</feature>
<gene>
    <name type="ORF">RCOM_0936380</name>
</gene>